<dbReference type="EMBL" id="CP001341">
    <property type="protein sequence ID" value="ACL39414.1"/>
    <property type="status" value="ALT_INIT"/>
    <property type="molecule type" value="Genomic_DNA"/>
</dbReference>
<dbReference type="RefSeq" id="WP_043793861.1">
    <property type="nucleotide sequence ID" value="NC_011886.1"/>
</dbReference>
<dbReference type="SMR" id="B8HG52"/>
<dbReference type="STRING" id="452863.Achl_1424"/>
<dbReference type="KEGG" id="ach:Achl_1424"/>
<dbReference type="eggNOG" id="COG0779">
    <property type="taxonomic scope" value="Bacteria"/>
</dbReference>
<dbReference type="HOGENOM" id="CLU_070525_3_0_11"/>
<dbReference type="OrthoDB" id="9805006at2"/>
<dbReference type="Proteomes" id="UP000002505">
    <property type="component" value="Chromosome"/>
</dbReference>
<dbReference type="GO" id="GO:0005829">
    <property type="term" value="C:cytosol"/>
    <property type="evidence" value="ECO:0007669"/>
    <property type="project" value="TreeGrafter"/>
</dbReference>
<dbReference type="GO" id="GO:0000028">
    <property type="term" value="P:ribosomal small subunit assembly"/>
    <property type="evidence" value="ECO:0007669"/>
    <property type="project" value="TreeGrafter"/>
</dbReference>
<dbReference type="GO" id="GO:0006412">
    <property type="term" value="P:translation"/>
    <property type="evidence" value="ECO:0007669"/>
    <property type="project" value="TreeGrafter"/>
</dbReference>
<dbReference type="CDD" id="cd01734">
    <property type="entry name" value="YlxS_C"/>
    <property type="match status" value="1"/>
</dbReference>
<dbReference type="Gene3D" id="3.30.300.70">
    <property type="entry name" value="RimP-like superfamily, N-terminal"/>
    <property type="match status" value="1"/>
</dbReference>
<dbReference type="HAMAP" id="MF_01077">
    <property type="entry name" value="RimP"/>
    <property type="match status" value="1"/>
</dbReference>
<dbReference type="InterPro" id="IPR003728">
    <property type="entry name" value="Ribosome_maturation_RimP"/>
</dbReference>
<dbReference type="InterPro" id="IPR028998">
    <property type="entry name" value="RimP_C"/>
</dbReference>
<dbReference type="InterPro" id="IPR036847">
    <property type="entry name" value="RimP_C_sf"/>
</dbReference>
<dbReference type="InterPro" id="IPR028989">
    <property type="entry name" value="RimP_N"/>
</dbReference>
<dbReference type="InterPro" id="IPR035956">
    <property type="entry name" value="RimP_N_sf"/>
</dbReference>
<dbReference type="PANTHER" id="PTHR33867">
    <property type="entry name" value="RIBOSOME MATURATION FACTOR RIMP"/>
    <property type="match status" value="1"/>
</dbReference>
<dbReference type="PANTHER" id="PTHR33867:SF1">
    <property type="entry name" value="RIBOSOME MATURATION FACTOR RIMP"/>
    <property type="match status" value="1"/>
</dbReference>
<dbReference type="Pfam" id="PF17384">
    <property type="entry name" value="DUF150_C"/>
    <property type="match status" value="1"/>
</dbReference>
<dbReference type="Pfam" id="PF02576">
    <property type="entry name" value="RimP_N"/>
    <property type="match status" value="1"/>
</dbReference>
<dbReference type="SUPFAM" id="SSF74942">
    <property type="entry name" value="YhbC-like, C-terminal domain"/>
    <property type="match status" value="1"/>
</dbReference>
<dbReference type="SUPFAM" id="SSF75420">
    <property type="entry name" value="YhbC-like, N-terminal domain"/>
    <property type="match status" value="1"/>
</dbReference>
<proteinExistence type="inferred from homology"/>
<evidence type="ECO:0000255" key="1">
    <source>
        <dbReference type="HAMAP-Rule" id="MF_01077"/>
    </source>
</evidence>
<evidence type="ECO:0000256" key="2">
    <source>
        <dbReference type="SAM" id="MobiDB-lite"/>
    </source>
</evidence>
<evidence type="ECO:0000305" key="3"/>
<name>RIMP_PSECP</name>
<comment type="function">
    <text evidence="1">Required for maturation of 30S ribosomal subunits.</text>
</comment>
<comment type="subcellular location">
    <subcellularLocation>
        <location evidence="1">Cytoplasm</location>
    </subcellularLocation>
</comment>
<comment type="similarity">
    <text evidence="1">Belongs to the RimP family.</text>
</comment>
<comment type="sequence caution" evidence="3">
    <conflict type="erroneous initiation">
        <sequence resource="EMBL-CDS" id="ACL39414"/>
    </conflict>
</comment>
<accession>B8HG52</accession>
<gene>
    <name evidence="1" type="primary">rimP</name>
    <name type="ordered locus">Achl_1424</name>
</gene>
<feature type="chain" id="PRO_0000384605" description="Ribosome maturation factor RimP">
    <location>
        <begin position="1"/>
        <end position="205"/>
    </location>
</feature>
<feature type="region of interest" description="Disordered" evidence="2">
    <location>
        <begin position="1"/>
        <end position="24"/>
    </location>
</feature>
<feature type="region of interest" description="Disordered" evidence="2">
    <location>
        <begin position="186"/>
        <end position="205"/>
    </location>
</feature>
<feature type="compositionally biased region" description="Polar residues" evidence="2">
    <location>
        <begin position="1"/>
        <end position="12"/>
    </location>
</feature>
<reference key="1">
    <citation type="submission" date="2009-01" db="EMBL/GenBank/DDBJ databases">
        <title>Complete sequence of chromosome of Arthrobacter chlorophenolicus A6.</title>
        <authorList>
            <consortium name="US DOE Joint Genome Institute"/>
            <person name="Lucas S."/>
            <person name="Copeland A."/>
            <person name="Lapidus A."/>
            <person name="Glavina del Rio T."/>
            <person name="Tice H."/>
            <person name="Bruce D."/>
            <person name="Goodwin L."/>
            <person name="Pitluck S."/>
            <person name="Goltsman E."/>
            <person name="Clum A."/>
            <person name="Larimer F."/>
            <person name="Land M."/>
            <person name="Hauser L."/>
            <person name="Kyrpides N."/>
            <person name="Mikhailova N."/>
            <person name="Jansson J."/>
            <person name="Richardson P."/>
        </authorList>
    </citation>
    <scope>NUCLEOTIDE SEQUENCE [LARGE SCALE GENOMIC DNA]</scope>
    <source>
        <strain>ATCC 700700 / DSM 12829 / CIP 107037 / JCM 12360 / KCTC 9906 / NCIMB 13794 / A6</strain>
    </source>
</reference>
<protein>
    <recommendedName>
        <fullName evidence="1">Ribosome maturation factor RimP</fullName>
    </recommendedName>
</protein>
<keyword id="KW-0963">Cytoplasm</keyword>
<keyword id="KW-0690">Ribosome biogenesis</keyword>
<organism>
    <name type="scientific">Pseudarthrobacter chlorophenolicus (strain ATCC 700700 / DSM 12829 / CIP 107037 / JCM 12360 / KCTC 9906 / NCIMB 13794 / A6)</name>
    <name type="common">Arthrobacter chlorophenolicus</name>
    <dbReference type="NCBI Taxonomy" id="452863"/>
    <lineage>
        <taxon>Bacteria</taxon>
        <taxon>Bacillati</taxon>
        <taxon>Actinomycetota</taxon>
        <taxon>Actinomycetes</taxon>
        <taxon>Micrococcales</taxon>
        <taxon>Micrococcaceae</taxon>
        <taxon>Pseudarthrobacter</taxon>
    </lineage>
</organism>
<sequence>MSNAEAQASSDHTAPGKADTAPAHNPEADRLRALLEPSVLANRLYLEDVVINVAGSHRVVHVVVDLPQEETGGVSLDVIADISKVLSDALDNDPGADTRPYDLEVSSPGVGRPLTEPRHWHRAKGRIATVKVIQGENVTGRIQSVDDGGVTLVPEIAVKKGMKPKQGDPVKLPFDRIRTGKVEIEFSHLSEDGLEPEHNGPSEEA</sequence>